<organism>
    <name type="scientific">Bacillus subtilis (strain 168)</name>
    <dbReference type="NCBI Taxonomy" id="224308"/>
    <lineage>
        <taxon>Bacteria</taxon>
        <taxon>Bacillati</taxon>
        <taxon>Bacillota</taxon>
        <taxon>Bacilli</taxon>
        <taxon>Bacillales</taxon>
        <taxon>Bacillaceae</taxon>
        <taxon>Bacillus</taxon>
    </lineage>
</organism>
<sequence length="136" mass="15605">MKTFKLVDLNVERVDKEEQSIEQFPLIDGLIINKEDGENHWLIEALVQKEHLSFFEQLQNSQSEAKVFVTITKKSNRPAQLTAAVKNIVKLEESIQVLLYGQMVTRKQQGTETILESLVKEGYTGTKLIEAFKQKL</sequence>
<proteinExistence type="predicted"/>
<feature type="chain" id="PRO_0000375914" description="Uncharacterized protein YwpF">
    <location>
        <begin position="1"/>
        <end position="136"/>
    </location>
</feature>
<gene>
    <name type="primary">ywpF</name>
    <name type="ordered locus">BSU36330</name>
</gene>
<name>YWPF_BACSU</name>
<reference key="1">
    <citation type="journal article" date="1997" name="Microbiology">
        <title>The Bacillus subtilis genome from gerBC (311 degrees) to licR (334 degrees).</title>
        <authorList>
            <person name="Presecan E."/>
            <person name="Moszer I."/>
            <person name="Boursier L."/>
            <person name="Cruz Ramos H."/>
            <person name="De La Fuente V."/>
            <person name="Hullo M.-F."/>
            <person name="Lelong C."/>
            <person name="Schleich S."/>
            <person name="Sekowska A."/>
            <person name="Song B.H."/>
            <person name="Villani G."/>
            <person name="Kunst F."/>
            <person name="Danchin A."/>
            <person name="Glaser P."/>
        </authorList>
    </citation>
    <scope>NUCLEOTIDE SEQUENCE [GENOMIC DNA]</scope>
    <source>
        <strain>168</strain>
    </source>
</reference>
<reference key="2">
    <citation type="journal article" date="1997" name="Nature">
        <title>The complete genome sequence of the Gram-positive bacterium Bacillus subtilis.</title>
        <authorList>
            <person name="Kunst F."/>
            <person name="Ogasawara N."/>
            <person name="Moszer I."/>
            <person name="Albertini A.M."/>
            <person name="Alloni G."/>
            <person name="Azevedo V."/>
            <person name="Bertero M.G."/>
            <person name="Bessieres P."/>
            <person name="Bolotin A."/>
            <person name="Borchert S."/>
            <person name="Borriss R."/>
            <person name="Boursier L."/>
            <person name="Brans A."/>
            <person name="Braun M."/>
            <person name="Brignell S.C."/>
            <person name="Bron S."/>
            <person name="Brouillet S."/>
            <person name="Bruschi C.V."/>
            <person name="Caldwell B."/>
            <person name="Capuano V."/>
            <person name="Carter N.M."/>
            <person name="Choi S.-K."/>
            <person name="Codani J.-J."/>
            <person name="Connerton I.F."/>
            <person name="Cummings N.J."/>
            <person name="Daniel R.A."/>
            <person name="Denizot F."/>
            <person name="Devine K.M."/>
            <person name="Duesterhoeft A."/>
            <person name="Ehrlich S.D."/>
            <person name="Emmerson P.T."/>
            <person name="Entian K.-D."/>
            <person name="Errington J."/>
            <person name="Fabret C."/>
            <person name="Ferrari E."/>
            <person name="Foulger D."/>
            <person name="Fritz C."/>
            <person name="Fujita M."/>
            <person name="Fujita Y."/>
            <person name="Fuma S."/>
            <person name="Galizzi A."/>
            <person name="Galleron N."/>
            <person name="Ghim S.-Y."/>
            <person name="Glaser P."/>
            <person name="Goffeau A."/>
            <person name="Golightly E.J."/>
            <person name="Grandi G."/>
            <person name="Guiseppi G."/>
            <person name="Guy B.J."/>
            <person name="Haga K."/>
            <person name="Haiech J."/>
            <person name="Harwood C.R."/>
            <person name="Henaut A."/>
            <person name="Hilbert H."/>
            <person name="Holsappel S."/>
            <person name="Hosono S."/>
            <person name="Hullo M.-F."/>
            <person name="Itaya M."/>
            <person name="Jones L.-M."/>
            <person name="Joris B."/>
            <person name="Karamata D."/>
            <person name="Kasahara Y."/>
            <person name="Klaerr-Blanchard M."/>
            <person name="Klein C."/>
            <person name="Kobayashi Y."/>
            <person name="Koetter P."/>
            <person name="Koningstein G."/>
            <person name="Krogh S."/>
            <person name="Kumano M."/>
            <person name="Kurita K."/>
            <person name="Lapidus A."/>
            <person name="Lardinois S."/>
            <person name="Lauber J."/>
            <person name="Lazarevic V."/>
            <person name="Lee S.-M."/>
            <person name="Levine A."/>
            <person name="Liu H."/>
            <person name="Masuda S."/>
            <person name="Mauel C."/>
            <person name="Medigue C."/>
            <person name="Medina N."/>
            <person name="Mellado R.P."/>
            <person name="Mizuno M."/>
            <person name="Moestl D."/>
            <person name="Nakai S."/>
            <person name="Noback M."/>
            <person name="Noone D."/>
            <person name="O'Reilly M."/>
            <person name="Ogawa K."/>
            <person name="Ogiwara A."/>
            <person name="Oudega B."/>
            <person name="Park S.-H."/>
            <person name="Parro V."/>
            <person name="Pohl T.M."/>
            <person name="Portetelle D."/>
            <person name="Porwollik S."/>
            <person name="Prescott A.M."/>
            <person name="Presecan E."/>
            <person name="Pujic P."/>
            <person name="Purnelle B."/>
            <person name="Rapoport G."/>
            <person name="Rey M."/>
            <person name="Reynolds S."/>
            <person name="Rieger M."/>
            <person name="Rivolta C."/>
            <person name="Rocha E."/>
            <person name="Roche B."/>
            <person name="Rose M."/>
            <person name="Sadaie Y."/>
            <person name="Sato T."/>
            <person name="Scanlan E."/>
            <person name="Schleich S."/>
            <person name="Schroeter R."/>
            <person name="Scoffone F."/>
            <person name="Sekiguchi J."/>
            <person name="Sekowska A."/>
            <person name="Seror S.J."/>
            <person name="Serror P."/>
            <person name="Shin B.-S."/>
            <person name="Soldo B."/>
            <person name="Sorokin A."/>
            <person name="Tacconi E."/>
            <person name="Takagi T."/>
            <person name="Takahashi H."/>
            <person name="Takemaru K."/>
            <person name="Takeuchi M."/>
            <person name="Tamakoshi A."/>
            <person name="Tanaka T."/>
            <person name="Terpstra P."/>
            <person name="Tognoni A."/>
            <person name="Tosato V."/>
            <person name="Uchiyama S."/>
            <person name="Vandenbol M."/>
            <person name="Vannier F."/>
            <person name="Vassarotti A."/>
            <person name="Viari A."/>
            <person name="Wambutt R."/>
            <person name="Wedler E."/>
            <person name="Wedler H."/>
            <person name="Weitzenegger T."/>
            <person name="Winters P."/>
            <person name="Wipat A."/>
            <person name="Yamamoto H."/>
            <person name="Yamane K."/>
            <person name="Yasumoto K."/>
            <person name="Yata K."/>
            <person name="Yoshida K."/>
            <person name="Yoshikawa H.-F."/>
            <person name="Zumstein E."/>
            <person name="Yoshikawa H."/>
            <person name="Danchin A."/>
        </authorList>
    </citation>
    <scope>NUCLEOTIDE SEQUENCE [LARGE SCALE GENOMIC DNA]</scope>
    <source>
        <strain>168</strain>
    </source>
</reference>
<accession>P94588</accession>
<accession>Q795A9</accession>
<dbReference type="EMBL" id="Z83337">
    <property type="protein sequence ID" value="CAB05947.1"/>
    <property type="molecule type" value="Genomic_DNA"/>
</dbReference>
<dbReference type="EMBL" id="AL009126">
    <property type="protein sequence ID" value="CAB15650.1"/>
    <property type="molecule type" value="Genomic_DNA"/>
</dbReference>
<dbReference type="PIR" id="H70065">
    <property type="entry name" value="H70065"/>
</dbReference>
<dbReference type="RefSeq" id="NP_391514.1">
    <property type="nucleotide sequence ID" value="NC_000964.3"/>
</dbReference>
<dbReference type="RefSeq" id="WP_003227794.1">
    <property type="nucleotide sequence ID" value="NZ_OZ025638.1"/>
</dbReference>
<dbReference type="SMR" id="P94588"/>
<dbReference type="FunCoup" id="P94588">
    <property type="interactions" value="56"/>
</dbReference>
<dbReference type="STRING" id="224308.BSU36330"/>
<dbReference type="PaxDb" id="224308-BSU36330"/>
<dbReference type="EnsemblBacteria" id="CAB15650">
    <property type="protein sequence ID" value="CAB15650"/>
    <property type="gene ID" value="BSU_36330"/>
</dbReference>
<dbReference type="GeneID" id="936915"/>
<dbReference type="KEGG" id="bsu:BSU36330"/>
<dbReference type="PATRIC" id="fig|224308.179.peg.3932"/>
<dbReference type="eggNOG" id="ENOG5032YSB">
    <property type="taxonomic scope" value="Bacteria"/>
</dbReference>
<dbReference type="InParanoid" id="P94588"/>
<dbReference type="OrthoDB" id="2427395at2"/>
<dbReference type="PhylomeDB" id="P94588"/>
<dbReference type="BioCyc" id="BSUB:BSU36330-MONOMER"/>
<dbReference type="Proteomes" id="UP000001570">
    <property type="component" value="Chromosome"/>
</dbReference>
<dbReference type="InterPro" id="IPR025573">
    <property type="entry name" value="YwpF"/>
</dbReference>
<dbReference type="Pfam" id="PF14183">
    <property type="entry name" value="YwpF"/>
    <property type="match status" value="1"/>
</dbReference>
<protein>
    <recommendedName>
        <fullName>Uncharacterized protein YwpF</fullName>
    </recommendedName>
</protein>
<keyword id="KW-1185">Reference proteome</keyword>